<sequence length="222" mass="25421">MIFVENKEIVLPGSLLTDNNYKLGRGTYKENGKIYSSITGLVYFESEQIKVIPLKDTYSPNYGDLVIGRVTGSSYSSWSIDINSTYHGFLPTTELYDKNEPNINNIINIKDMLLLRVANVDEINRVKLTLRSRGLGKFNQGTIIKVKQPTIHFLSEENAFLTTMIQEYTYTDVIIGKNGLIWINGLKENIERIIEIIELIEKEEPLKHNLIKHIQSMILNPK</sequence>
<evidence type="ECO:0000255" key="1">
    <source>
        <dbReference type="HAMAP-Rule" id="MF_00623"/>
    </source>
</evidence>
<comment type="function">
    <text evidence="1">Non-catalytic component of the exosome, which is a complex involved in RNA degradation. Increases the RNA binding and the efficiency of RNA degradation. Confers strong poly(A) specificity to the exosome.</text>
</comment>
<comment type="subunit">
    <text evidence="1">Component of the archaeal exosome complex. Forms a trimer of Rrp4 and/or Csl4 subunits. The trimer associates with a hexameric ring-like arrangement composed of 3 Rrp41-Rrp42 heterodimers.</text>
</comment>
<comment type="subcellular location">
    <subcellularLocation>
        <location evidence="1">Cytoplasm</location>
    </subcellularLocation>
</comment>
<comment type="similarity">
    <text evidence="1">Belongs to the RRP4 family.</text>
</comment>
<accession>Q2NEX6</accession>
<organism>
    <name type="scientific">Methanosphaera stadtmanae (strain ATCC 43021 / DSM 3091 / JCM 11832 / MCB-3)</name>
    <dbReference type="NCBI Taxonomy" id="339860"/>
    <lineage>
        <taxon>Archaea</taxon>
        <taxon>Methanobacteriati</taxon>
        <taxon>Methanobacteriota</taxon>
        <taxon>Methanomada group</taxon>
        <taxon>Methanobacteria</taxon>
        <taxon>Methanobacteriales</taxon>
        <taxon>Methanobacteriaceae</taxon>
        <taxon>Methanosphaera</taxon>
    </lineage>
</organism>
<name>RRP4_METST</name>
<protein>
    <recommendedName>
        <fullName evidence="1">Exosome complex component Rrp4</fullName>
    </recommendedName>
</protein>
<feature type="chain" id="PRO_0000416232" description="Exosome complex component Rrp4">
    <location>
        <begin position="1"/>
        <end position="222"/>
    </location>
</feature>
<feature type="domain" description="S1 motif" evidence="1">
    <location>
        <begin position="63"/>
        <end position="131"/>
    </location>
</feature>
<proteinExistence type="inferred from homology"/>
<keyword id="KW-0963">Cytoplasm</keyword>
<keyword id="KW-0271">Exosome</keyword>
<keyword id="KW-1185">Reference proteome</keyword>
<keyword id="KW-0694">RNA-binding</keyword>
<dbReference type="EMBL" id="CP000102">
    <property type="protein sequence ID" value="ABC57627.1"/>
    <property type="molecule type" value="Genomic_DNA"/>
</dbReference>
<dbReference type="RefSeq" id="WP_011406826.1">
    <property type="nucleotide sequence ID" value="NC_007681.1"/>
</dbReference>
<dbReference type="SMR" id="Q2NEX6"/>
<dbReference type="STRING" id="339860.Msp_1250"/>
<dbReference type="KEGG" id="mst:Msp_1250"/>
<dbReference type="eggNOG" id="arCOG00678">
    <property type="taxonomic scope" value="Archaea"/>
</dbReference>
<dbReference type="HOGENOM" id="CLU_071769_0_0_2"/>
<dbReference type="OrthoDB" id="35160at2157"/>
<dbReference type="Proteomes" id="UP000001931">
    <property type="component" value="Chromosome"/>
</dbReference>
<dbReference type="GO" id="GO:0005737">
    <property type="term" value="C:cytoplasm"/>
    <property type="evidence" value="ECO:0007669"/>
    <property type="project" value="UniProtKB-SubCell"/>
</dbReference>
<dbReference type="GO" id="GO:0000178">
    <property type="term" value="C:exosome (RNase complex)"/>
    <property type="evidence" value="ECO:0007669"/>
    <property type="project" value="UniProtKB-KW"/>
</dbReference>
<dbReference type="GO" id="GO:0043231">
    <property type="term" value="C:intracellular membrane-bounded organelle"/>
    <property type="evidence" value="ECO:0007669"/>
    <property type="project" value="UniProtKB-ARBA"/>
</dbReference>
<dbReference type="GO" id="GO:0008143">
    <property type="term" value="F:poly(A) binding"/>
    <property type="evidence" value="ECO:0007669"/>
    <property type="project" value="InterPro"/>
</dbReference>
<dbReference type="GO" id="GO:0071034">
    <property type="term" value="P:CUT catabolic process"/>
    <property type="evidence" value="ECO:0007669"/>
    <property type="project" value="TreeGrafter"/>
</dbReference>
<dbReference type="GO" id="GO:0000467">
    <property type="term" value="P:exonucleolytic trimming to generate mature 3'-end of 5.8S rRNA from tricistronic rRNA transcript (SSU-rRNA, 5.8S rRNA, LSU-rRNA)"/>
    <property type="evidence" value="ECO:0007669"/>
    <property type="project" value="TreeGrafter"/>
</dbReference>
<dbReference type="GO" id="GO:0071051">
    <property type="term" value="P:poly(A)-dependent snoRNA 3'-end processing"/>
    <property type="evidence" value="ECO:0007669"/>
    <property type="project" value="TreeGrafter"/>
</dbReference>
<dbReference type="GO" id="GO:0006401">
    <property type="term" value="P:RNA catabolic process"/>
    <property type="evidence" value="ECO:0007669"/>
    <property type="project" value="UniProtKB-UniRule"/>
</dbReference>
<dbReference type="GO" id="GO:0034475">
    <property type="term" value="P:U4 snRNA 3'-end processing"/>
    <property type="evidence" value="ECO:0007669"/>
    <property type="project" value="TreeGrafter"/>
</dbReference>
<dbReference type="CDD" id="cd05789">
    <property type="entry name" value="S1_Rrp4"/>
    <property type="match status" value="1"/>
</dbReference>
<dbReference type="Gene3D" id="2.40.50.100">
    <property type="match status" value="1"/>
</dbReference>
<dbReference type="Gene3D" id="3.30.1370.10">
    <property type="entry name" value="K Homology domain, type 1"/>
    <property type="match status" value="1"/>
</dbReference>
<dbReference type="Gene3D" id="2.40.50.140">
    <property type="entry name" value="Nucleic acid-binding proteins"/>
    <property type="match status" value="1"/>
</dbReference>
<dbReference type="HAMAP" id="MF_00623">
    <property type="entry name" value="Exosome_Rrp4"/>
    <property type="match status" value="1"/>
</dbReference>
<dbReference type="InterPro" id="IPR026699">
    <property type="entry name" value="Exosome_RNA_bind1/RRP40/RRP4"/>
</dbReference>
<dbReference type="InterPro" id="IPR036612">
    <property type="entry name" value="KH_dom_type_1_sf"/>
</dbReference>
<dbReference type="InterPro" id="IPR012340">
    <property type="entry name" value="NA-bd_OB-fold"/>
</dbReference>
<dbReference type="InterPro" id="IPR023474">
    <property type="entry name" value="Rrp4"/>
</dbReference>
<dbReference type="InterPro" id="IPR054371">
    <property type="entry name" value="RRP4_N"/>
</dbReference>
<dbReference type="InterPro" id="IPR048565">
    <property type="entry name" value="RRP4_S1"/>
</dbReference>
<dbReference type="InterPro" id="IPR003029">
    <property type="entry name" value="S1_domain"/>
</dbReference>
<dbReference type="PANTHER" id="PTHR21321:SF4">
    <property type="entry name" value="EXOSOME COMPLEX COMPONENT RRP4"/>
    <property type="match status" value="1"/>
</dbReference>
<dbReference type="PANTHER" id="PTHR21321">
    <property type="entry name" value="PNAS-3 RELATED"/>
    <property type="match status" value="1"/>
</dbReference>
<dbReference type="Pfam" id="PF22625">
    <property type="entry name" value="ECR1_N_2"/>
    <property type="match status" value="1"/>
</dbReference>
<dbReference type="Pfam" id="PF21266">
    <property type="entry name" value="RRP4_S1"/>
    <property type="match status" value="1"/>
</dbReference>
<dbReference type="SUPFAM" id="SSF54791">
    <property type="entry name" value="Eukaryotic type KH-domain (KH-domain type I)"/>
    <property type="match status" value="1"/>
</dbReference>
<dbReference type="SUPFAM" id="SSF50249">
    <property type="entry name" value="Nucleic acid-binding proteins"/>
    <property type="match status" value="1"/>
</dbReference>
<dbReference type="SUPFAM" id="SSF110324">
    <property type="entry name" value="Ribosomal L27 protein-like"/>
    <property type="match status" value="1"/>
</dbReference>
<dbReference type="PROSITE" id="PS50126">
    <property type="entry name" value="S1"/>
    <property type="match status" value="1"/>
</dbReference>
<reference key="1">
    <citation type="journal article" date="2006" name="J. Bacteriol.">
        <title>The genome sequence of Methanosphaera stadtmanae reveals why this human intestinal archaeon is restricted to methanol and H2 for methane formation and ATP synthesis.</title>
        <authorList>
            <person name="Fricke W.F."/>
            <person name="Seedorf H."/>
            <person name="Henne A."/>
            <person name="Kruer M."/>
            <person name="Liesegang H."/>
            <person name="Hedderich R."/>
            <person name="Gottschalk G."/>
            <person name="Thauer R.K."/>
        </authorList>
    </citation>
    <scope>NUCLEOTIDE SEQUENCE [LARGE SCALE GENOMIC DNA]</scope>
    <source>
        <strain>ATCC 43021 / DSM 3091 / JCM 11832 / MCB-3</strain>
    </source>
</reference>
<gene>
    <name evidence="1" type="primary">rrp4</name>
    <name type="ordered locus">Msp_1250</name>
</gene>